<gene>
    <name evidence="1" type="primary">eno</name>
    <name type="ordered locus">EcolC_0933</name>
</gene>
<evidence type="ECO:0000255" key="1">
    <source>
        <dbReference type="HAMAP-Rule" id="MF_00318"/>
    </source>
</evidence>
<accession>B1IU62</accession>
<dbReference type="EC" id="4.2.1.11" evidence="1"/>
<dbReference type="EMBL" id="CP000946">
    <property type="protein sequence ID" value="ACA76602.1"/>
    <property type="molecule type" value="Genomic_DNA"/>
</dbReference>
<dbReference type="RefSeq" id="WP_000036723.1">
    <property type="nucleotide sequence ID" value="NZ_MTFT01000004.1"/>
</dbReference>
<dbReference type="SMR" id="B1IU62"/>
<dbReference type="GeneID" id="93779219"/>
<dbReference type="KEGG" id="ecl:EcolC_0933"/>
<dbReference type="HOGENOM" id="CLU_031223_2_1_6"/>
<dbReference type="UniPathway" id="UPA00109">
    <property type="reaction ID" value="UER00187"/>
</dbReference>
<dbReference type="GO" id="GO:0009986">
    <property type="term" value="C:cell surface"/>
    <property type="evidence" value="ECO:0007669"/>
    <property type="project" value="UniProtKB-SubCell"/>
</dbReference>
<dbReference type="GO" id="GO:0005576">
    <property type="term" value="C:extracellular region"/>
    <property type="evidence" value="ECO:0007669"/>
    <property type="project" value="UniProtKB-SubCell"/>
</dbReference>
<dbReference type="GO" id="GO:0000015">
    <property type="term" value="C:phosphopyruvate hydratase complex"/>
    <property type="evidence" value="ECO:0007669"/>
    <property type="project" value="InterPro"/>
</dbReference>
<dbReference type="GO" id="GO:0000287">
    <property type="term" value="F:magnesium ion binding"/>
    <property type="evidence" value="ECO:0007669"/>
    <property type="project" value="UniProtKB-UniRule"/>
</dbReference>
<dbReference type="GO" id="GO:0004634">
    <property type="term" value="F:phosphopyruvate hydratase activity"/>
    <property type="evidence" value="ECO:0007669"/>
    <property type="project" value="UniProtKB-UniRule"/>
</dbReference>
<dbReference type="GO" id="GO:0006096">
    <property type="term" value="P:glycolytic process"/>
    <property type="evidence" value="ECO:0007669"/>
    <property type="project" value="UniProtKB-UniRule"/>
</dbReference>
<dbReference type="CDD" id="cd03313">
    <property type="entry name" value="enolase"/>
    <property type="match status" value="1"/>
</dbReference>
<dbReference type="FunFam" id="3.20.20.120:FF:000001">
    <property type="entry name" value="Enolase"/>
    <property type="match status" value="1"/>
</dbReference>
<dbReference type="FunFam" id="3.30.390.10:FF:000001">
    <property type="entry name" value="Enolase"/>
    <property type="match status" value="1"/>
</dbReference>
<dbReference type="Gene3D" id="3.20.20.120">
    <property type="entry name" value="Enolase-like C-terminal domain"/>
    <property type="match status" value="1"/>
</dbReference>
<dbReference type="Gene3D" id="3.30.390.10">
    <property type="entry name" value="Enolase-like, N-terminal domain"/>
    <property type="match status" value="1"/>
</dbReference>
<dbReference type="HAMAP" id="MF_00318">
    <property type="entry name" value="Enolase"/>
    <property type="match status" value="1"/>
</dbReference>
<dbReference type="InterPro" id="IPR000941">
    <property type="entry name" value="Enolase"/>
</dbReference>
<dbReference type="InterPro" id="IPR036849">
    <property type="entry name" value="Enolase-like_C_sf"/>
</dbReference>
<dbReference type="InterPro" id="IPR029017">
    <property type="entry name" value="Enolase-like_N"/>
</dbReference>
<dbReference type="InterPro" id="IPR020810">
    <property type="entry name" value="Enolase_C"/>
</dbReference>
<dbReference type="InterPro" id="IPR020809">
    <property type="entry name" value="Enolase_CS"/>
</dbReference>
<dbReference type="InterPro" id="IPR020811">
    <property type="entry name" value="Enolase_N"/>
</dbReference>
<dbReference type="NCBIfam" id="TIGR01060">
    <property type="entry name" value="eno"/>
    <property type="match status" value="1"/>
</dbReference>
<dbReference type="PANTHER" id="PTHR11902">
    <property type="entry name" value="ENOLASE"/>
    <property type="match status" value="1"/>
</dbReference>
<dbReference type="PANTHER" id="PTHR11902:SF1">
    <property type="entry name" value="ENOLASE"/>
    <property type="match status" value="1"/>
</dbReference>
<dbReference type="Pfam" id="PF00113">
    <property type="entry name" value="Enolase_C"/>
    <property type="match status" value="1"/>
</dbReference>
<dbReference type="Pfam" id="PF03952">
    <property type="entry name" value="Enolase_N"/>
    <property type="match status" value="1"/>
</dbReference>
<dbReference type="PIRSF" id="PIRSF001400">
    <property type="entry name" value="Enolase"/>
    <property type="match status" value="1"/>
</dbReference>
<dbReference type="PRINTS" id="PR00148">
    <property type="entry name" value="ENOLASE"/>
</dbReference>
<dbReference type="SFLD" id="SFLDS00001">
    <property type="entry name" value="Enolase"/>
    <property type="match status" value="1"/>
</dbReference>
<dbReference type="SFLD" id="SFLDF00002">
    <property type="entry name" value="enolase"/>
    <property type="match status" value="1"/>
</dbReference>
<dbReference type="SMART" id="SM01192">
    <property type="entry name" value="Enolase_C"/>
    <property type="match status" value="1"/>
</dbReference>
<dbReference type="SMART" id="SM01193">
    <property type="entry name" value="Enolase_N"/>
    <property type="match status" value="1"/>
</dbReference>
<dbReference type="SUPFAM" id="SSF51604">
    <property type="entry name" value="Enolase C-terminal domain-like"/>
    <property type="match status" value="1"/>
</dbReference>
<dbReference type="SUPFAM" id="SSF54826">
    <property type="entry name" value="Enolase N-terminal domain-like"/>
    <property type="match status" value="1"/>
</dbReference>
<dbReference type="PROSITE" id="PS00164">
    <property type="entry name" value="ENOLASE"/>
    <property type="match status" value="1"/>
</dbReference>
<proteinExistence type="inferred from homology"/>
<protein>
    <recommendedName>
        <fullName evidence="1">Enolase</fullName>
        <ecNumber evidence="1">4.2.1.11</ecNumber>
    </recommendedName>
    <alternativeName>
        <fullName evidence="1">2-phospho-D-glycerate hydro-lyase</fullName>
    </alternativeName>
    <alternativeName>
        <fullName evidence="1">2-phosphoglycerate dehydratase</fullName>
    </alternativeName>
</protein>
<reference key="1">
    <citation type="submission" date="2008-02" db="EMBL/GenBank/DDBJ databases">
        <title>Complete sequence of Escherichia coli C str. ATCC 8739.</title>
        <authorList>
            <person name="Copeland A."/>
            <person name="Lucas S."/>
            <person name="Lapidus A."/>
            <person name="Glavina del Rio T."/>
            <person name="Dalin E."/>
            <person name="Tice H."/>
            <person name="Bruce D."/>
            <person name="Goodwin L."/>
            <person name="Pitluck S."/>
            <person name="Kiss H."/>
            <person name="Brettin T."/>
            <person name="Detter J.C."/>
            <person name="Han C."/>
            <person name="Kuske C.R."/>
            <person name="Schmutz J."/>
            <person name="Larimer F."/>
            <person name="Land M."/>
            <person name="Hauser L."/>
            <person name="Kyrpides N."/>
            <person name="Mikhailova N."/>
            <person name="Ingram L."/>
            <person name="Richardson P."/>
        </authorList>
    </citation>
    <scope>NUCLEOTIDE SEQUENCE [LARGE SCALE GENOMIC DNA]</scope>
    <source>
        <strain>ATCC 8739 / DSM 1576 / NBRC 3972 / NCIMB 8545 / WDCM 00012 / Crooks</strain>
    </source>
</reference>
<organism>
    <name type="scientific">Escherichia coli (strain ATCC 8739 / DSM 1576 / NBRC 3972 / NCIMB 8545 / WDCM 00012 / Crooks)</name>
    <dbReference type="NCBI Taxonomy" id="481805"/>
    <lineage>
        <taxon>Bacteria</taxon>
        <taxon>Pseudomonadati</taxon>
        <taxon>Pseudomonadota</taxon>
        <taxon>Gammaproteobacteria</taxon>
        <taxon>Enterobacterales</taxon>
        <taxon>Enterobacteriaceae</taxon>
        <taxon>Escherichia</taxon>
    </lineage>
</organism>
<feature type="chain" id="PRO_1000079134" description="Enolase">
    <location>
        <begin position="1"/>
        <end position="432"/>
    </location>
</feature>
<feature type="active site" description="Proton donor" evidence="1">
    <location>
        <position position="209"/>
    </location>
</feature>
<feature type="active site" description="Proton acceptor" evidence="1">
    <location>
        <position position="342"/>
    </location>
</feature>
<feature type="binding site" evidence="1">
    <location>
        <position position="167"/>
    </location>
    <ligand>
        <name>(2R)-2-phosphoglycerate</name>
        <dbReference type="ChEBI" id="CHEBI:58289"/>
    </ligand>
</feature>
<feature type="binding site" evidence="1">
    <location>
        <position position="246"/>
    </location>
    <ligand>
        <name>Mg(2+)</name>
        <dbReference type="ChEBI" id="CHEBI:18420"/>
    </ligand>
</feature>
<feature type="binding site" evidence="1">
    <location>
        <position position="290"/>
    </location>
    <ligand>
        <name>Mg(2+)</name>
        <dbReference type="ChEBI" id="CHEBI:18420"/>
    </ligand>
</feature>
<feature type="binding site" evidence="1">
    <location>
        <position position="317"/>
    </location>
    <ligand>
        <name>Mg(2+)</name>
        <dbReference type="ChEBI" id="CHEBI:18420"/>
    </ligand>
</feature>
<feature type="binding site" evidence="1">
    <location>
        <position position="342"/>
    </location>
    <ligand>
        <name>(2R)-2-phosphoglycerate</name>
        <dbReference type="ChEBI" id="CHEBI:58289"/>
    </ligand>
</feature>
<feature type="binding site" evidence="1">
    <location>
        <position position="371"/>
    </location>
    <ligand>
        <name>(2R)-2-phosphoglycerate</name>
        <dbReference type="ChEBI" id="CHEBI:58289"/>
    </ligand>
</feature>
<feature type="binding site" evidence="1">
    <location>
        <position position="372"/>
    </location>
    <ligand>
        <name>(2R)-2-phosphoglycerate</name>
        <dbReference type="ChEBI" id="CHEBI:58289"/>
    </ligand>
</feature>
<feature type="binding site" evidence="1">
    <location>
        <position position="393"/>
    </location>
    <ligand>
        <name>(2R)-2-phosphoglycerate</name>
        <dbReference type="ChEBI" id="CHEBI:58289"/>
    </ligand>
</feature>
<comment type="function">
    <text evidence="1">Catalyzes the reversible conversion of 2-phosphoglycerate (2-PG) into phosphoenolpyruvate (PEP). It is essential for the degradation of carbohydrates via glycolysis.</text>
</comment>
<comment type="catalytic activity">
    <reaction evidence="1">
        <text>(2R)-2-phosphoglycerate = phosphoenolpyruvate + H2O</text>
        <dbReference type="Rhea" id="RHEA:10164"/>
        <dbReference type="ChEBI" id="CHEBI:15377"/>
        <dbReference type="ChEBI" id="CHEBI:58289"/>
        <dbReference type="ChEBI" id="CHEBI:58702"/>
        <dbReference type="EC" id="4.2.1.11"/>
    </reaction>
</comment>
<comment type="cofactor">
    <cofactor evidence="1">
        <name>Mg(2+)</name>
        <dbReference type="ChEBI" id="CHEBI:18420"/>
    </cofactor>
    <text evidence="1">Binds a second Mg(2+) ion via substrate during catalysis.</text>
</comment>
<comment type="pathway">
    <text evidence="1">Carbohydrate degradation; glycolysis; pyruvate from D-glyceraldehyde 3-phosphate: step 4/5.</text>
</comment>
<comment type="subunit">
    <text evidence="1">Component of the RNA degradosome, a multiprotein complex involved in RNA processing and mRNA degradation.</text>
</comment>
<comment type="subcellular location">
    <subcellularLocation>
        <location evidence="1">Cytoplasm</location>
    </subcellularLocation>
    <subcellularLocation>
        <location evidence="1">Secreted</location>
    </subcellularLocation>
    <subcellularLocation>
        <location evidence="1">Cell surface</location>
    </subcellularLocation>
    <text evidence="1">Fractions of enolase are present in both the cytoplasm and on the cell surface.</text>
</comment>
<comment type="similarity">
    <text evidence="1">Belongs to the enolase family.</text>
</comment>
<sequence>MSKIVKIIGREIIDSRGNPTVEAEVHLEGGFVGMAAAPSGASTGSREALELRDGDKSRFLGKGVTKAVAAVNGPIAQALIGKDAKDQAGIDKIMIDLDGTENKSKFGANAILAVSLANAKAAAAAKGMPLYEHIAELNGTPGKYSMPVPMMNIINGGEHADNNVDIQEFMIQPVGAKTVKEAIRMGSEVFHHLAKVLKAKGMNTAVGDEGGYAPNLGSNAEALAVIAEAVKAAGYELGKDITLAMDCAASEFYKDGKYVLAGEGNKAFTSEEFTHFLEELTKQYPIVSIEDGLDESDWDGFAYQTKVLGDKIQLVGDDLFVTNTKILKEGIEKGIANSILIKFNQIGSLTETLAAIKMAKDAGYTAVISHRSGETEDATIADLAVGTAAGQIKTGSMSRSDRVAKYNQLIRIEEALGEKAPYNGRKEIKGQA</sequence>
<name>ENO_ECOLC</name>
<keyword id="KW-0963">Cytoplasm</keyword>
<keyword id="KW-0324">Glycolysis</keyword>
<keyword id="KW-0456">Lyase</keyword>
<keyword id="KW-0460">Magnesium</keyword>
<keyword id="KW-0479">Metal-binding</keyword>
<keyword id="KW-0964">Secreted</keyword>